<sequence length="465" mass="50422">MSQGKIVQIIGAVVDVEFPRDMIPRVYDALKLDENGLTLEVQQLLGDGVVRTIAMGSSDGLKRGMTVSNTGAPITVPVGKGTLGRIVDVLGTPVDEAGPIDTDKSRAIHQAAPKFDELSSTTELLETGIKVIDLLCPFAKGGKVGLFGGAGVGKTVNMMELINNIAKAHSGLSVFAGVGERTREGNDFYHEMKDSNVLDKVAMVYGQMNEPPGNRLRVALTGLTMAEYFRDEKDENGKGRDVLFFVDNIYRYTLAGTEVSALLGRMPSAVGYQPTLAEEMGRLQERITSTQTGSITSIQAVYVPADDLTDPSPATTFAHLDATVVLSRDIASLGIYPAVDPLDSTSRQLDPMVLGQEHYDVARGVQSTLQKYKELRDIIAILGMDELSDEDKLTVMRARKIQRFLSQPFHVAEVFTGSPGKYVALRDTIAGFKAILNGEYDHLPEQAFYMVGSIEEAVEKAKTLN</sequence>
<keyword id="KW-0066">ATP synthesis</keyword>
<keyword id="KW-0067">ATP-binding</keyword>
<keyword id="KW-0997">Cell inner membrane</keyword>
<keyword id="KW-1003">Cell membrane</keyword>
<keyword id="KW-0139">CF(1)</keyword>
<keyword id="KW-0375">Hydrogen ion transport</keyword>
<keyword id="KW-0406">Ion transport</keyword>
<keyword id="KW-0472">Membrane</keyword>
<keyword id="KW-0547">Nucleotide-binding</keyword>
<keyword id="KW-1278">Translocase</keyword>
<keyword id="KW-0813">Transport</keyword>
<feature type="chain" id="PRO_1000086914" description="ATP synthase subunit beta">
    <location>
        <begin position="1"/>
        <end position="465"/>
    </location>
</feature>
<feature type="binding site" evidence="1">
    <location>
        <begin position="148"/>
        <end position="155"/>
    </location>
    <ligand>
        <name>ATP</name>
        <dbReference type="ChEBI" id="CHEBI:30616"/>
    </ligand>
</feature>
<organism>
    <name type="scientific">Neisseria meningitidis serogroup C (strain 053442)</name>
    <dbReference type="NCBI Taxonomy" id="374833"/>
    <lineage>
        <taxon>Bacteria</taxon>
        <taxon>Pseudomonadati</taxon>
        <taxon>Pseudomonadota</taxon>
        <taxon>Betaproteobacteria</taxon>
        <taxon>Neisseriales</taxon>
        <taxon>Neisseriaceae</taxon>
        <taxon>Neisseria</taxon>
    </lineage>
</organism>
<reference key="1">
    <citation type="journal article" date="2008" name="Genomics">
        <title>Characterization of ST-4821 complex, a unique Neisseria meningitidis clone.</title>
        <authorList>
            <person name="Peng J."/>
            <person name="Yang L."/>
            <person name="Yang F."/>
            <person name="Yang J."/>
            <person name="Yan Y."/>
            <person name="Nie H."/>
            <person name="Zhang X."/>
            <person name="Xiong Z."/>
            <person name="Jiang Y."/>
            <person name="Cheng F."/>
            <person name="Xu X."/>
            <person name="Chen S."/>
            <person name="Sun L."/>
            <person name="Li W."/>
            <person name="Shen Y."/>
            <person name="Shao Z."/>
            <person name="Liang X."/>
            <person name="Xu J."/>
            <person name="Jin Q."/>
        </authorList>
    </citation>
    <scope>NUCLEOTIDE SEQUENCE [LARGE SCALE GENOMIC DNA]</scope>
    <source>
        <strain>053442</strain>
    </source>
</reference>
<name>ATPB_NEIM0</name>
<accession>A9M123</accession>
<proteinExistence type="inferred from homology"/>
<evidence type="ECO:0000255" key="1">
    <source>
        <dbReference type="HAMAP-Rule" id="MF_01347"/>
    </source>
</evidence>
<dbReference type="EC" id="7.1.2.2" evidence="1"/>
<dbReference type="EMBL" id="CP000381">
    <property type="protein sequence ID" value="ABX72492.1"/>
    <property type="molecule type" value="Genomic_DNA"/>
</dbReference>
<dbReference type="RefSeq" id="WP_002218047.1">
    <property type="nucleotide sequence ID" value="NC_010120.1"/>
</dbReference>
<dbReference type="SMR" id="A9M123"/>
<dbReference type="KEGG" id="nmn:NMCC_0284"/>
<dbReference type="HOGENOM" id="CLU_022398_0_2_4"/>
<dbReference type="Proteomes" id="UP000001177">
    <property type="component" value="Chromosome"/>
</dbReference>
<dbReference type="GO" id="GO:0005886">
    <property type="term" value="C:plasma membrane"/>
    <property type="evidence" value="ECO:0007669"/>
    <property type="project" value="UniProtKB-SubCell"/>
</dbReference>
<dbReference type="GO" id="GO:0045259">
    <property type="term" value="C:proton-transporting ATP synthase complex"/>
    <property type="evidence" value="ECO:0007669"/>
    <property type="project" value="UniProtKB-KW"/>
</dbReference>
<dbReference type="GO" id="GO:0005524">
    <property type="term" value="F:ATP binding"/>
    <property type="evidence" value="ECO:0007669"/>
    <property type="project" value="UniProtKB-UniRule"/>
</dbReference>
<dbReference type="GO" id="GO:0016887">
    <property type="term" value="F:ATP hydrolysis activity"/>
    <property type="evidence" value="ECO:0007669"/>
    <property type="project" value="InterPro"/>
</dbReference>
<dbReference type="GO" id="GO:0046933">
    <property type="term" value="F:proton-transporting ATP synthase activity, rotational mechanism"/>
    <property type="evidence" value="ECO:0007669"/>
    <property type="project" value="UniProtKB-UniRule"/>
</dbReference>
<dbReference type="CDD" id="cd18110">
    <property type="entry name" value="ATP-synt_F1_beta_C"/>
    <property type="match status" value="1"/>
</dbReference>
<dbReference type="CDD" id="cd18115">
    <property type="entry name" value="ATP-synt_F1_beta_N"/>
    <property type="match status" value="1"/>
</dbReference>
<dbReference type="CDD" id="cd01133">
    <property type="entry name" value="F1-ATPase_beta_CD"/>
    <property type="match status" value="1"/>
</dbReference>
<dbReference type="FunFam" id="1.10.1140.10:FF:000001">
    <property type="entry name" value="ATP synthase subunit beta"/>
    <property type="match status" value="1"/>
</dbReference>
<dbReference type="FunFam" id="2.40.10.170:FF:000003">
    <property type="entry name" value="ATP synthase subunit beta"/>
    <property type="match status" value="1"/>
</dbReference>
<dbReference type="FunFam" id="3.40.50.300:FF:000004">
    <property type="entry name" value="ATP synthase subunit beta"/>
    <property type="match status" value="1"/>
</dbReference>
<dbReference type="Gene3D" id="2.40.10.170">
    <property type="match status" value="1"/>
</dbReference>
<dbReference type="Gene3D" id="1.10.1140.10">
    <property type="entry name" value="Bovine Mitochondrial F1-atpase, Atp Synthase Beta Chain, Chain D, domain 3"/>
    <property type="match status" value="1"/>
</dbReference>
<dbReference type="Gene3D" id="3.40.50.300">
    <property type="entry name" value="P-loop containing nucleotide triphosphate hydrolases"/>
    <property type="match status" value="1"/>
</dbReference>
<dbReference type="HAMAP" id="MF_01347">
    <property type="entry name" value="ATP_synth_beta_bact"/>
    <property type="match status" value="1"/>
</dbReference>
<dbReference type="InterPro" id="IPR003593">
    <property type="entry name" value="AAA+_ATPase"/>
</dbReference>
<dbReference type="InterPro" id="IPR055190">
    <property type="entry name" value="ATP-synt_VA_C"/>
</dbReference>
<dbReference type="InterPro" id="IPR005722">
    <property type="entry name" value="ATP_synth_F1_bsu"/>
</dbReference>
<dbReference type="InterPro" id="IPR020003">
    <property type="entry name" value="ATPase_a/bsu_AS"/>
</dbReference>
<dbReference type="InterPro" id="IPR050053">
    <property type="entry name" value="ATPase_alpha/beta_chains"/>
</dbReference>
<dbReference type="InterPro" id="IPR004100">
    <property type="entry name" value="ATPase_F1/V1/A1_a/bsu_N"/>
</dbReference>
<dbReference type="InterPro" id="IPR036121">
    <property type="entry name" value="ATPase_F1/V1/A1_a/bsu_N_sf"/>
</dbReference>
<dbReference type="InterPro" id="IPR000194">
    <property type="entry name" value="ATPase_F1/V1/A1_a/bsu_nucl-bd"/>
</dbReference>
<dbReference type="InterPro" id="IPR024034">
    <property type="entry name" value="ATPase_F1/V1_b/a_C"/>
</dbReference>
<dbReference type="InterPro" id="IPR027417">
    <property type="entry name" value="P-loop_NTPase"/>
</dbReference>
<dbReference type="NCBIfam" id="TIGR01039">
    <property type="entry name" value="atpD"/>
    <property type="match status" value="1"/>
</dbReference>
<dbReference type="PANTHER" id="PTHR15184">
    <property type="entry name" value="ATP SYNTHASE"/>
    <property type="match status" value="1"/>
</dbReference>
<dbReference type="PANTHER" id="PTHR15184:SF71">
    <property type="entry name" value="ATP SYNTHASE SUBUNIT BETA, MITOCHONDRIAL"/>
    <property type="match status" value="1"/>
</dbReference>
<dbReference type="Pfam" id="PF00006">
    <property type="entry name" value="ATP-synt_ab"/>
    <property type="match status" value="1"/>
</dbReference>
<dbReference type="Pfam" id="PF02874">
    <property type="entry name" value="ATP-synt_ab_N"/>
    <property type="match status" value="1"/>
</dbReference>
<dbReference type="Pfam" id="PF22919">
    <property type="entry name" value="ATP-synt_VA_C"/>
    <property type="match status" value="1"/>
</dbReference>
<dbReference type="SMART" id="SM00382">
    <property type="entry name" value="AAA"/>
    <property type="match status" value="1"/>
</dbReference>
<dbReference type="SUPFAM" id="SSF47917">
    <property type="entry name" value="C-terminal domain of alpha and beta subunits of F1 ATP synthase"/>
    <property type="match status" value="1"/>
</dbReference>
<dbReference type="SUPFAM" id="SSF50615">
    <property type="entry name" value="N-terminal domain of alpha and beta subunits of F1 ATP synthase"/>
    <property type="match status" value="1"/>
</dbReference>
<dbReference type="SUPFAM" id="SSF52540">
    <property type="entry name" value="P-loop containing nucleoside triphosphate hydrolases"/>
    <property type="match status" value="1"/>
</dbReference>
<dbReference type="PROSITE" id="PS00152">
    <property type="entry name" value="ATPASE_ALPHA_BETA"/>
    <property type="match status" value="1"/>
</dbReference>
<gene>
    <name evidence="1" type="primary">atpD</name>
    <name type="ordered locus">NMCC_0284</name>
</gene>
<protein>
    <recommendedName>
        <fullName evidence="1">ATP synthase subunit beta</fullName>
        <ecNumber evidence="1">7.1.2.2</ecNumber>
    </recommendedName>
    <alternativeName>
        <fullName evidence="1">ATP synthase F1 sector subunit beta</fullName>
    </alternativeName>
    <alternativeName>
        <fullName evidence="1">F-ATPase subunit beta</fullName>
    </alternativeName>
</protein>
<comment type="function">
    <text evidence="1">Produces ATP from ADP in the presence of a proton gradient across the membrane. The catalytic sites are hosted primarily by the beta subunits.</text>
</comment>
<comment type="catalytic activity">
    <reaction evidence="1">
        <text>ATP + H2O + 4 H(+)(in) = ADP + phosphate + 5 H(+)(out)</text>
        <dbReference type="Rhea" id="RHEA:57720"/>
        <dbReference type="ChEBI" id="CHEBI:15377"/>
        <dbReference type="ChEBI" id="CHEBI:15378"/>
        <dbReference type="ChEBI" id="CHEBI:30616"/>
        <dbReference type="ChEBI" id="CHEBI:43474"/>
        <dbReference type="ChEBI" id="CHEBI:456216"/>
        <dbReference type="EC" id="7.1.2.2"/>
    </reaction>
</comment>
<comment type="subunit">
    <text evidence="1">F-type ATPases have 2 components, CF(1) - the catalytic core - and CF(0) - the membrane proton channel. CF(1) has five subunits: alpha(3), beta(3), gamma(1), delta(1), epsilon(1). CF(0) has three main subunits: a(1), b(2) and c(9-12). The alpha and beta chains form an alternating ring which encloses part of the gamma chain. CF(1) is attached to CF(0) by a central stalk formed by the gamma and epsilon chains, while a peripheral stalk is formed by the delta and b chains.</text>
</comment>
<comment type="subcellular location">
    <subcellularLocation>
        <location evidence="1">Cell inner membrane</location>
        <topology evidence="1">Peripheral membrane protein</topology>
    </subcellularLocation>
</comment>
<comment type="similarity">
    <text evidence="1">Belongs to the ATPase alpha/beta chains family.</text>
</comment>